<organism>
    <name type="scientific">Vibrio vulnificus (strain CMCP6)</name>
    <dbReference type="NCBI Taxonomy" id="216895"/>
    <lineage>
        <taxon>Bacteria</taxon>
        <taxon>Pseudomonadati</taxon>
        <taxon>Pseudomonadota</taxon>
        <taxon>Gammaproteobacteria</taxon>
        <taxon>Vibrionales</taxon>
        <taxon>Vibrionaceae</taxon>
        <taxon>Vibrio</taxon>
    </lineage>
</organism>
<sequence>MAAKDVKFGNDARVKMLEGVNILADAVKVTLGPKGRNVVLDKSFGAPTITKDGVSVAREIELEDKFQNMGAQMVKQVASQANDVAGDGTTTATVLAQAIVNEGLKAVAAGMNPMDLKRGIDKAVAAAVEELKALSKDCSTSTEIEQVGTISANSDSSVGKIIAEAMEKVGRDGVITVEEGQALHDELDVVEGMQFDRGYLSPYFINNQESGSVELESPFILLVDKKISNIRELLPALEAVAKASRPLLIIAEDVEGEALATLVVNNMRGIVKVAAVKAPGFGDRRKAMLQDIAILTGGTVISEEVGLELEKATLEDLGQAKRVSITKENTTIIDGVGEEAMIQGRVAQIRQQIEDATSDYDKEKLQERVAKLAGGVAVIKVGAATEVEMKEKKDRVEDALHATRAAVEEGIVAGGGVALIRAASKIVDLQGDNEEQNVGIRVALRAMEAPLRQITKNAGDEESVVANNVRAGEGSYGYNAATGVYGDMLEMGILDPTKVTRSALQFAASVAGLMITTEAMVTDLPQKDSGMPDMGGMGGMGGMGMM</sequence>
<gene>
    <name evidence="1" type="primary">groEL1</name>
    <name evidence="1" type="synonym">groL1</name>
    <name type="ordered locus">VV1_1260</name>
</gene>
<reference key="1">
    <citation type="submission" date="2001-01" db="EMBL/GenBank/DDBJ databases">
        <authorList>
            <person name="Wong H.-C."/>
            <person name="Lu K.-H."/>
        </authorList>
    </citation>
    <scope>NUCLEOTIDE SEQUENCE [GENOMIC DNA]</scope>
</reference>
<reference key="2">
    <citation type="submission" date="2002-12" db="EMBL/GenBank/DDBJ databases">
        <title>Complete genome sequence of Vibrio vulnificus CMCP6.</title>
        <authorList>
            <person name="Rhee J.H."/>
            <person name="Kim S.Y."/>
            <person name="Chung S.S."/>
            <person name="Kim J.J."/>
            <person name="Moon Y.H."/>
            <person name="Jeong H."/>
            <person name="Choy H.E."/>
        </authorList>
    </citation>
    <scope>NUCLEOTIDE SEQUENCE [LARGE SCALE GENOMIC DNA]</scope>
    <source>
        <strain>CMCP6</strain>
    </source>
</reference>
<evidence type="ECO:0000255" key="1">
    <source>
        <dbReference type="HAMAP-Rule" id="MF_00600"/>
    </source>
</evidence>
<evidence type="ECO:0000305" key="2"/>
<keyword id="KW-0067">ATP-binding</keyword>
<keyword id="KW-0143">Chaperone</keyword>
<keyword id="KW-0963">Cytoplasm</keyword>
<keyword id="KW-0413">Isomerase</keyword>
<keyword id="KW-0547">Nucleotide-binding</keyword>
<feature type="chain" id="PRO_0000063599" description="Chaperonin GroEL 1">
    <location>
        <begin position="1"/>
        <end position="546"/>
    </location>
</feature>
<feature type="binding site" evidence="1">
    <location>
        <begin position="30"/>
        <end position="33"/>
    </location>
    <ligand>
        <name>ATP</name>
        <dbReference type="ChEBI" id="CHEBI:30616"/>
    </ligand>
</feature>
<feature type="binding site" evidence="1">
    <location>
        <position position="51"/>
    </location>
    <ligand>
        <name>ATP</name>
        <dbReference type="ChEBI" id="CHEBI:30616"/>
    </ligand>
</feature>
<feature type="binding site" evidence="1">
    <location>
        <begin position="87"/>
        <end position="91"/>
    </location>
    <ligand>
        <name>ATP</name>
        <dbReference type="ChEBI" id="CHEBI:30616"/>
    </ligand>
</feature>
<feature type="binding site" evidence="1">
    <location>
        <position position="415"/>
    </location>
    <ligand>
        <name>ATP</name>
        <dbReference type="ChEBI" id="CHEBI:30616"/>
    </ligand>
</feature>
<feature type="binding site" evidence="1">
    <location>
        <begin position="479"/>
        <end position="481"/>
    </location>
    <ligand>
        <name>ATP</name>
        <dbReference type="ChEBI" id="CHEBI:30616"/>
    </ligand>
</feature>
<feature type="binding site" evidence="1">
    <location>
        <position position="495"/>
    </location>
    <ligand>
        <name>ATP</name>
        <dbReference type="ChEBI" id="CHEBI:30616"/>
    </ligand>
</feature>
<feature type="sequence conflict" description="In Ref. 1; AAG48876." evidence="2" ref="1">
    <original>L</original>
    <variation>M</variation>
    <location>
        <position position="134"/>
    </location>
</feature>
<feature type="sequence conflict" description="In Ref. 1; AAG48876." evidence="2" ref="1">
    <original>I</original>
    <variation>F</variation>
    <location>
        <position position="220"/>
    </location>
</feature>
<feature type="sequence conflict" description="In Ref. 1; AAG48876." evidence="2" ref="1">
    <original>G</original>
    <variation>D</variation>
    <location>
        <position position="256"/>
    </location>
</feature>
<feature type="sequence conflict" description="In Ref. 1; AAG48876." evidence="2" ref="1">
    <original>K</original>
    <variation>I</variation>
    <location>
        <position position="272"/>
    </location>
</feature>
<feature type="sequence conflict" description="In Ref. 1; AAG48876." evidence="2" ref="1">
    <original>K</original>
    <variation>I</variation>
    <location>
        <position position="277"/>
    </location>
</feature>
<feature type="sequence conflict" description="In Ref. 1; AAG48876." evidence="2" ref="1">
    <original>E</original>
    <variation>K</variation>
    <location>
        <position position="388"/>
    </location>
</feature>
<feature type="sequence conflict" description="In Ref. 1; AAG48876." evidence="2" ref="1">
    <original>G</original>
    <variation>A</variation>
    <location>
        <position position="474"/>
    </location>
</feature>
<feature type="sequence conflict" description="In Ref. 1." evidence="2" ref="1">
    <original>M</original>
    <variation>GM</variation>
    <location>
        <position position="545"/>
    </location>
</feature>
<proteinExistence type="inferred from homology"/>
<name>CH601_VIBVU</name>
<accession>Q9ALA9</accession>
<comment type="function">
    <text evidence="1">Together with its co-chaperonin GroES, plays an essential role in assisting protein folding. The GroEL-GroES system forms a nano-cage that allows encapsulation of the non-native substrate proteins and provides a physical environment optimized to promote and accelerate protein folding.</text>
</comment>
<comment type="catalytic activity">
    <reaction evidence="1">
        <text>ATP + H2O + a folded polypeptide = ADP + phosphate + an unfolded polypeptide.</text>
        <dbReference type="EC" id="5.6.1.7"/>
    </reaction>
</comment>
<comment type="subunit">
    <text evidence="1">Forms a cylinder of 14 subunits composed of two heptameric rings stacked back-to-back. Interacts with the co-chaperonin GroES.</text>
</comment>
<comment type="subcellular location">
    <subcellularLocation>
        <location evidence="1">Cytoplasm</location>
    </subcellularLocation>
</comment>
<comment type="similarity">
    <text evidence="1">Belongs to the chaperonin (HSP60) family.</text>
</comment>
<dbReference type="EC" id="5.6.1.7" evidence="1"/>
<dbReference type="EMBL" id="AY017169">
    <property type="protein sequence ID" value="AAG48876.1"/>
    <property type="molecule type" value="Genomic_DNA"/>
</dbReference>
<dbReference type="EMBL" id="AE016795">
    <property type="protein sequence ID" value="AAO09716.1"/>
    <property type="molecule type" value="Genomic_DNA"/>
</dbReference>
<dbReference type="SMR" id="Q9ALA9"/>
<dbReference type="KEGG" id="vvu:VV1_1260"/>
<dbReference type="HOGENOM" id="CLU_016503_3_0_6"/>
<dbReference type="Proteomes" id="UP000002275">
    <property type="component" value="Chromosome 1"/>
</dbReference>
<dbReference type="GO" id="GO:0005737">
    <property type="term" value="C:cytoplasm"/>
    <property type="evidence" value="ECO:0007669"/>
    <property type="project" value="UniProtKB-SubCell"/>
</dbReference>
<dbReference type="GO" id="GO:0005524">
    <property type="term" value="F:ATP binding"/>
    <property type="evidence" value="ECO:0007669"/>
    <property type="project" value="UniProtKB-UniRule"/>
</dbReference>
<dbReference type="GO" id="GO:0140662">
    <property type="term" value="F:ATP-dependent protein folding chaperone"/>
    <property type="evidence" value="ECO:0007669"/>
    <property type="project" value="InterPro"/>
</dbReference>
<dbReference type="GO" id="GO:0016853">
    <property type="term" value="F:isomerase activity"/>
    <property type="evidence" value="ECO:0007669"/>
    <property type="project" value="UniProtKB-KW"/>
</dbReference>
<dbReference type="GO" id="GO:0051082">
    <property type="term" value="F:unfolded protein binding"/>
    <property type="evidence" value="ECO:0007669"/>
    <property type="project" value="UniProtKB-UniRule"/>
</dbReference>
<dbReference type="GO" id="GO:0042026">
    <property type="term" value="P:protein refolding"/>
    <property type="evidence" value="ECO:0007669"/>
    <property type="project" value="UniProtKB-UniRule"/>
</dbReference>
<dbReference type="CDD" id="cd03344">
    <property type="entry name" value="GroEL"/>
    <property type="match status" value="1"/>
</dbReference>
<dbReference type="FunFam" id="1.10.560.10:FF:000001">
    <property type="entry name" value="60 kDa chaperonin"/>
    <property type="match status" value="1"/>
</dbReference>
<dbReference type="FunFam" id="3.50.7.10:FF:000001">
    <property type="entry name" value="60 kDa chaperonin"/>
    <property type="match status" value="1"/>
</dbReference>
<dbReference type="Gene3D" id="3.50.7.10">
    <property type="entry name" value="GroEL"/>
    <property type="match status" value="1"/>
</dbReference>
<dbReference type="Gene3D" id="1.10.560.10">
    <property type="entry name" value="GroEL-like equatorial domain"/>
    <property type="match status" value="1"/>
</dbReference>
<dbReference type="Gene3D" id="3.30.260.10">
    <property type="entry name" value="TCP-1-like chaperonin intermediate domain"/>
    <property type="match status" value="1"/>
</dbReference>
<dbReference type="HAMAP" id="MF_00600">
    <property type="entry name" value="CH60"/>
    <property type="match status" value="1"/>
</dbReference>
<dbReference type="InterPro" id="IPR018370">
    <property type="entry name" value="Chaperonin_Cpn60_CS"/>
</dbReference>
<dbReference type="InterPro" id="IPR001844">
    <property type="entry name" value="Cpn60/GroEL"/>
</dbReference>
<dbReference type="InterPro" id="IPR002423">
    <property type="entry name" value="Cpn60/GroEL/TCP-1"/>
</dbReference>
<dbReference type="InterPro" id="IPR027409">
    <property type="entry name" value="GroEL-like_apical_dom_sf"/>
</dbReference>
<dbReference type="InterPro" id="IPR027413">
    <property type="entry name" value="GROEL-like_equatorial_sf"/>
</dbReference>
<dbReference type="InterPro" id="IPR027410">
    <property type="entry name" value="TCP-1-like_intermed_sf"/>
</dbReference>
<dbReference type="NCBIfam" id="TIGR02348">
    <property type="entry name" value="GroEL"/>
    <property type="match status" value="1"/>
</dbReference>
<dbReference type="NCBIfam" id="NF000592">
    <property type="entry name" value="PRK00013.1"/>
    <property type="match status" value="1"/>
</dbReference>
<dbReference type="NCBIfam" id="NF009487">
    <property type="entry name" value="PRK12849.1"/>
    <property type="match status" value="1"/>
</dbReference>
<dbReference type="NCBIfam" id="NF009488">
    <property type="entry name" value="PRK12850.1"/>
    <property type="match status" value="1"/>
</dbReference>
<dbReference type="NCBIfam" id="NF009489">
    <property type="entry name" value="PRK12851.1"/>
    <property type="match status" value="1"/>
</dbReference>
<dbReference type="PANTHER" id="PTHR45633">
    <property type="entry name" value="60 KDA HEAT SHOCK PROTEIN, MITOCHONDRIAL"/>
    <property type="match status" value="1"/>
</dbReference>
<dbReference type="Pfam" id="PF00118">
    <property type="entry name" value="Cpn60_TCP1"/>
    <property type="match status" value="1"/>
</dbReference>
<dbReference type="PRINTS" id="PR00298">
    <property type="entry name" value="CHAPERONIN60"/>
</dbReference>
<dbReference type="SUPFAM" id="SSF52029">
    <property type="entry name" value="GroEL apical domain-like"/>
    <property type="match status" value="1"/>
</dbReference>
<dbReference type="SUPFAM" id="SSF48592">
    <property type="entry name" value="GroEL equatorial domain-like"/>
    <property type="match status" value="2"/>
</dbReference>
<dbReference type="PROSITE" id="PS00296">
    <property type="entry name" value="CHAPERONINS_CPN60"/>
    <property type="match status" value="1"/>
</dbReference>
<protein>
    <recommendedName>
        <fullName evidence="1">Chaperonin GroEL 1</fullName>
        <ecNumber evidence="1">5.6.1.7</ecNumber>
    </recommendedName>
    <alternativeName>
        <fullName evidence="1">60 kDa chaperonin 1</fullName>
    </alternativeName>
    <alternativeName>
        <fullName evidence="1">Chaperonin-60 1</fullName>
        <shortName evidence="1">Cpn60 1</shortName>
    </alternativeName>
</protein>